<proteinExistence type="evidence at transcript level"/>
<keyword id="KW-0472">Membrane</keyword>
<keyword id="KW-1185">Reference proteome</keyword>
<keyword id="KW-0812">Transmembrane</keyword>
<keyword id="KW-1133">Transmembrane helix</keyword>
<evidence type="ECO:0000255" key="1"/>
<evidence type="ECO:0000256" key="2">
    <source>
        <dbReference type="SAM" id="MobiDB-lite"/>
    </source>
</evidence>
<evidence type="ECO:0000269" key="3">
    <source>
    </source>
</evidence>
<evidence type="ECO:0000303" key="4">
    <source>
    </source>
</evidence>
<evidence type="ECO:0000305" key="5"/>
<evidence type="ECO:0000312" key="6">
    <source>
        <dbReference type="Araport" id="AT2G20130"/>
    </source>
</evidence>
<evidence type="ECO:0000312" key="7">
    <source>
        <dbReference type="EMBL" id="AAD24400.2"/>
    </source>
</evidence>
<evidence type="ECO:0000312" key="8">
    <source>
        <dbReference type="EMBL" id="AAL62439.1"/>
    </source>
</evidence>
<name>LCV1_ARATH</name>
<organism evidence="8">
    <name type="scientific">Arabidopsis thaliana</name>
    <name type="common">Mouse-ear cress</name>
    <dbReference type="NCBI Taxonomy" id="3702"/>
    <lineage>
        <taxon>Eukaryota</taxon>
        <taxon>Viridiplantae</taxon>
        <taxon>Streptophyta</taxon>
        <taxon>Embryophyta</taxon>
        <taxon>Tracheophyta</taxon>
        <taxon>Spermatophyta</taxon>
        <taxon>Magnoliopsida</taxon>
        <taxon>eudicotyledons</taxon>
        <taxon>Gunneridae</taxon>
        <taxon>Pentapetalae</taxon>
        <taxon>rosids</taxon>
        <taxon>malvids</taxon>
        <taxon>Brassicales</taxon>
        <taxon>Brassicaceae</taxon>
        <taxon>Camelineae</taxon>
        <taxon>Arabidopsis</taxon>
    </lineage>
</organism>
<sequence length="256" mass="28379">MANRERDRELLIPVADFGDKDDGSSSKPSSSSSASSSHQSGHETLSLFIRGWASKKFMTGCVILLPIAVTFYTTWWFIHFVDGFFSPIYALLGINIFGFGFLTSIAFIFLVGVFMSSWLGASVLNLGEWFIKRMPFVRHIYNASKQISTAISPDQNTQAFKEVAIIRHPRVGEYAFGFITSTVVLQNYPTEEELCCVYVPTNHLYIGDILLVNSNDVIRPNLSVREGIEIVVSGGMSMPQILSTLDKPLASIGNES</sequence>
<gene>
    <name evidence="4" type="primary">LCV1</name>
    <name evidence="6" type="ordered locus">At2g20130</name>
    <name evidence="7" type="ORF">T2G17.7</name>
</gene>
<reference key="1">
    <citation type="journal article" date="1999" name="Nature">
        <title>Sequence and analysis of chromosome 2 of the plant Arabidopsis thaliana.</title>
        <authorList>
            <person name="Lin X."/>
            <person name="Kaul S."/>
            <person name="Rounsley S.D."/>
            <person name="Shea T.P."/>
            <person name="Benito M.-I."/>
            <person name="Town C.D."/>
            <person name="Fujii C.Y."/>
            <person name="Mason T.M."/>
            <person name="Bowman C.L."/>
            <person name="Barnstead M.E."/>
            <person name="Feldblyum T.V."/>
            <person name="Buell C.R."/>
            <person name="Ketchum K.A."/>
            <person name="Lee J.J."/>
            <person name="Ronning C.M."/>
            <person name="Koo H.L."/>
            <person name="Moffat K.S."/>
            <person name="Cronin L.A."/>
            <person name="Shen M."/>
            <person name="Pai G."/>
            <person name="Van Aken S."/>
            <person name="Umayam L."/>
            <person name="Tallon L.J."/>
            <person name="Gill J.E."/>
            <person name="Adams M.D."/>
            <person name="Carrera A.J."/>
            <person name="Creasy T.H."/>
            <person name="Goodman H.M."/>
            <person name="Somerville C.R."/>
            <person name="Copenhaver G.P."/>
            <person name="Preuss D."/>
            <person name="Nierman W.C."/>
            <person name="White O."/>
            <person name="Eisen J.A."/>
            <person name="Salzberg S.L."/>
            <person name="Fraser C.M."/>
            <person name="Venter J.C."/>
        </authorList>
    </citation>
    <scope>NUCLEOTIDE SEQUENCE [LARGE SCALE GENOMIC DNA]</scope>
    <source>
        <strain>cv. Columbia</strain>
    </source>
</reference>
<reference key="2">
    <citation type="journal article" date="2017" name="Plant J.">
        <title>Araport11: a complete reannotation of the Arabidopsis thaliana reference genome.</title>
        <authorList>
            <person name="Cheng C.Y."/>
            <person name="Krishnakumar V."/>
            <person name="Chan A.P."/>
            <person name="Thibaud-Nissen F."/>
            <person name="Schobel S."/>
            <person name="Town C.D."/>
        </authorList>
    </citation>
    <scope>GENOME REANNOTATION</scope>
    <source>
        <strain>cv. Columbia</strain>
    </source>
</reference>
<reference key="3">
    <citation type="journal article" date="2003" name="Science">
        <title>Empirical analysis of transcriptional activity in the Arabidopsis genome.</title>
        <authorList>
            <person name="Yamada K."/>
            <person name="Lim J."/>
            <person name="Dale J.M."/>
            <person name="Chen H."/>
            <person name="Shinn P."/>
            <person name="Palm C.J."/>
            <person name="Southwick A.M."/>
            <person name="Wu H.C."/>
            <person name="Kim C.J."/>
            <person name="Nguyen M."/>
            <person name="Pham P.K."/>
            <person name="Cheuk R.F."/>
            <person name="Karlin-Newmann G."/>
            <person name="Liu S.X."/>
            <person name="Lam B."/>
            <person name="Sakano H."/>
            <person name="Wu T."/>
            <person name="Yu G."/>
            <person name="Miranda M."/>
            <person name="Quach H.L."/>
            <person name="Tripp M."/>
            <person name="Chang C.H."/>
            <person name="Lee J.M."/>
            <person name="Toriumi M.J."/>
            <person name="Chan M.M."/>
            <person name="Tang C.C."/>
            <person name="Onodera C.S."/>
            <person name="Deng J.M."/>
            <person name="Akiyama K."/>
            <person name="Ansari Y."/>
            <person name="Arakawa T."/>
            <person name="Banh J."/>
            <person name="Banno F."/>
            <person name="Bowser L."/>
            <person name="Brooks S.Y."/>
            <person name="Carninci P."/>
            <person name="Chao Q."/>
            <person name="Choy N."/>
            <person name="Enju A."/>
            <person name="Goldsmith A.D."/>
            <person name="Gurjal M."/>
            <person name="Hansen N.F."/>
            <person name="Hayashizaki Y."/>
            <person name="Johnson-Hopson C."/>
            <person name="Hsuan V.W."/>
            <person name="Iida K."/>
            <person name="Karnes M."/>
            <person name="Khan S."/>
            <person name="Koesema E."/>
            <person name="Ishida J."/>
            <person name="Jiang P.X."/>
            <person name="Jones T."/>
            <person name="Kawai J."/>
            <person name="Kamiya A."/>
            <person name="Meyers C."/>
            <person name="Nakajima M."/>
            <person name="Narusaka M."/>
            <person name="Seki M."/>
            <person name="Sakurai T."/>
            <person name="Satou M."/>
            <person name="Tamse R."/>
            <person name="Vaysberg M."/>
            <person name="Wallender E.K."/>
            <person name="Wong C."/>
            <person name="Yamamura Y."/>
            <person name="Yuan S."/>
            <person name="Shinozaki K."/>
            <person name="Davis R.W."/>
            <person name="Theologis A."/>
            <person name="Ecker J.R."/>
        </authorList>
    </citation>
    <scope>NUCLEOTIDE SEQUENCE [LARGE SCALE MRNA]</scope>
    <source>
        <strain>cv. Columbia</strain>
    </source>
</reference>
<reference key="4">
    <citation type="submission" date="2002-03" db="EMBL/GenBank/DDBJ databases">
        <title>Full-length cDNA from Arabidopsis thaliana.</title>
        <authorList>
            <person name="Brover V.V."/>
            <person name="Troukhan M.E."/>
            <person name="Alexandrov N.A."/>
            <person name="Lu Y.-P."/>
            <person name="Flavell R.B."/>
            <person name="Feldmann K.A."/>
        </authorList>
    </citation>
    <scope>NUCLEOTIDE SEQUENCE [LARGE SCALE MRNA]</scope>
</reference>
<reference key="5">
    <citation type="journal article" date="2003" name="Development">
        <title>Isolation of COV1, a gene involved in the regulation of vascular patterning in the stem of Arabidopsis.</title>
        <authorList>
            <person name="Parker G."/>
            <person name="Schofield R."/>
            <person name="Sundberg B."/>
            <person name="Turner S."/>
        </authorList>
    </citation>
    <scope>TISSUE SPECIFICITY</scope>
    <scope>GENE FAMILY</scope>
    <scope>NOMENCLATURE</scope>
    <source>
        <strain>cv. Landsberg erecta</strain>
    </source>
</reference>
<dbReference type="EMBL" id="AC006081">
    <property type="protein sequence ID" value="AAD24400.2"/>
    <property type="molecule type" value="Genomic_DNA"/>
</dbReference>
<dbReference type="EMBL" id="CP002685">
    <property type="protein sequence ID" value="AEC06969.1"/>
    <property type="molecule type" value="Genomic_DNA"/>
</dbReference>
<dbReference type="EMBL" id="AY072447">
    <property type="protein sequence ID" value="AAL62439.1"/>
    <property type="molecule type" value="mRNA"/>
</dbReference>
<dbReference type="EMBL" id="AY128911">
    <property type="protein sequence ID" value="AAM91311.1"/>
    <property type="molecule type" value="mRNA"/>
</dbReference>
<dbReference type="EMBL" id="AY084942">
    <property type="protein sequence ID" value="AAM61503.1"/>
    <property type="molecule type" value="mRNA"/>
</dbReference>
<dbReference type="PIR" id="D84585">
    <property type="entry name" value="D84585"/>
</dbReference>
<dbReference type="RefSeq" id="NP_565465.1">
    <property type="nucleotide sequence ID" value="NM_127571.3"/>
</dbReference>
<dbReference type="FunCoup" id="Q8VY49">
    <property type="interactions" value="41"/>
</dbReference>
<dbReference type="IntAct" id="Q8VY49">
    <property type="interactions" value="23"/>
</dbReference>
<dbReference type="STRING" id="3702.Q8VY49"/>
<dbReference type="PaxDb" id="3702-AT2G20130.1"/>
<dbReference type="ProteomicsDB" id="238411"/>
<dbReference type="EnsemblPlants" id="AT2G20130.1">
    <property type="protein sequence ID" value="AT2G20130.1"/>
    <property type="gene ID" value="AT2G20130"/>
</dbReference>
<dbReference type="GeneID" id="816532"/>
<dbReference type="Gramene" id="AT2G20130.1">
    <property type="protein sequence ID" value="AT2G20130.1"/>
    <property type="gene ID" value="AT2G20130"/>
</dbReference>
<dbReference type="KEGG" id="ath:AT2G20130"/>
<dbReference type="Araport" id="AT2G20130"/>
<dbReference type="TAIR" id="AT2G20130">
    <property type="gene designation" value="LCV1"/>
</dbReference>
<dbReference type="eggNOG" id="ENOG502QPUG">
    <property type="taxonomic scope" value="Eukaryota"/>
</dbReference>
<dbReference type="HOGENOM" id="CLU_068050_0_1_1"/>
<dbReference type="InParanoid" id="Q8VY49"/>
<dbReference type="OMA" id="TTGWYTL"/>
<dbReference type="OrthoDB" id="534431at2759"/>
<dbReference type="PhylomeDB" id="Q8VY49"/>
<dbReference type="PRO" id="PR:Q8VY49"/>
<dbReference type="Proteomes" id="UP000006548">
    <property type="component" value="Chromosome 2"/>
</dbReference>
<dbReference type="ExpressionAtlas" id="Q8VY49">
    <property type="expression patterns" value="baseline and differential"/>
</dbReference>
<dbReference type="GO" id="GO:0005794">
    <property type="term" value="C:Golgi apparatus"/>
    <property type="evidence" value="ECO:0007005"/>
    <property type="project" value="TAIR"/>
</dbReference>
<dbReference type="GO" id="GO:0000137">
    <property type="term" value="C:Golgi cis cisterna"/>
    <property type="evidence" value="ECO:0007005"/>
    <property type="project" value="TAIR"/>
</dbReference>
<dbReference type="GO" id="GO:0016020">
    <property type="term" value="C:membrane"/>
    <property type="evidence" value="ECO:0007669"/>
    <property type="project" value="UniProtKB-SubCell"/>
</dbReference>
<dbReference type="InterPro" id="IPR007462">
    <property type="entry name" value="COV1-like"/>
</dbReference>
<dbReference type="PANTHER" id="PTHR31876">
    <property type="entry name" value="COV-LIKE PROTEIN 1"/>
    <property type="match status" value="1"/>
</dbReference>
<dbReference type="PANTHER" id="PTHR31876:SF19">
    <property type="entry name" value="PROTEIN CONTINUOUS VASCULAR RING 1-RELATED"/>
    <property type="match status" value="1"/>
</dbReference>
<dbReference type="Pfam" id="PF04367">
    <property type="entry name" value="DUF502"/>
    <property type="match status" value="1"/>
</dbReference>
<comment type="subcellular location">
    <subcellularLocation>
        <location evidence="1">Membrane</location>
        <topology evidence="1">Multi-pass membrane protein</topology>
    </subcellularLocation>
</comment>
<comment type="tissue specificity">
    <text evidence="3">Expressed at low levels in flowers, stems, roots and leaves.</text>
</comment>
<comment type="similarity">
    <text evidence="5">Belongs to the plant COV1 protein family.</text>
</comment>
<feature type="chain" id="PRO_0000431899" description="Protein LIKE COV 1">
    <location>
        <begin position="1"/>
        <end position="256"/>
    </location>
</feature>
<feature type="topological domain" description="Cytoplasmic" evidence="5">
    <location>
        <begin position="1"/>
        <end position="60"/>
    </location>
</feature>
<feature type="transmembrane region" description="Helical; Name=1" evidence="1">
    <location>
        <begin position="61"/>
        <end position="81"/>
    </location>
</feature>
<feature type="topological domain" description="Extracellular" evidence="5">
    <location>
        <begin position="82"/>
        <end position="93"/>
    </location>
</feature>
<feature type="transmembrane region" description="Helical; Name=2" evidence="1">
    <location>
        <begin position="94"/>
        <end position="114"/>
    </location>
</feature>
<feature type="topological domain" description="Cytoplasmic" evidence="5">
    <location>
        <begin position="115"/>
        <end position="256"/>
    </location>
</feature>
<feature type="region of interest" description="Disordered" evidence="2">
    <location>
        <begin position="1"/>
        <end position="39"/>
    </location>
</feature>
<feature type="compositionally biased region" description="Basic and acidic residues" evidence="2">
    <location>
        <begin position="1"/>
        <end position="10"/>
    </location>
</feature>
<feature type="compositionally biased region" description="Low complexity" evidence="2">
    <location>
        <begin position="25"/>
        <end position="39"/>
    </location>
</feature>
<accession>Q8VY49</accession>
<accession>Q9SL68</accession>
<protein>
    <recommendedName>
        <fullName evidence="4">Protein LIKE COV 1</fullName>
    </recommendedName>
</protein>